<keyword id="KW-0007">Acetylation</keyword>
<keyword id="KW-0114">cAMP</keyword>
<keyword id="KW-0116">cAMP-binding</keyword>
<keyword id="KW-1003">Cell membrane</keyword>
<keyword id="KW-1015">Disulfide bond</keyword>
<keyword id="KW-0472">Membrane</keyword>
<keyword id="KW-0547">Nucleotide-binding</keyword>
<keyword id="KW-0597">Phosphoprotein</keyword>
<keyword id="KW-1185">Reference proteome</keyword>
<keyword id="KW-0677">Repeat</keyword>
<feature type="chain" id="PRO_0000293482" description="cAMP-dependent protein kinase type I-alpha regulatory subunit">
    <location>
        <begin position="1"/>
        <end position="381"/>
    </location>
</feature>
<feature type="region of interest" description="Dimerization and phosphorylation" evidence="1">
    <location>
        <begin position="1"/>
        <end position="135"/>
    </location>
</feature>
<feature type="region of interest" description="Disordered" evidence="5">
    <location>
        <begin position="64"/>
        <end position="96"/>
    </location>
</feature>
<feature type="short sequence motif" description="Pseudophosphorylation motif">
    <location>
        <begin position="96"/>
        <end position="100"/>
    </location>
</feature>
<feature type="binding site">
    <location>
        <begin position="137"/>
        <end position="254"/>
    </location>
    <ligand>
        <name>3',5'-cyclic AMP</name>
        <dbReference type="ChEBI" id="CHEBI:58165"/>
        <label>1</label>
    </ligand>
</feature>
<feature type="binding site" evidence="1">
    <location>
        <position position="202"/>
    </location>
    <ligand>
        <name>3',5'-cyclic AMP</name>
        <dbReference type="ChEBI" id="CHEBI:58165"/>
        <label>1</label>
    </ligand>
</feature>
<feature type="binding site" evidence="1">
    <location>
        <position position="211"/>
    </location>
    <ligand>
        <name>3',5'-cyclic AMP</name>
        <dbReference type="ChEBI" id="CHEBI:58165"/>
        <label>1</label>
    </ligand>
</feature>
<feature type="binding site">
    <location>
        <begin position="255"/>
        <end position="381"/>
    </location>
    <ligand>
        <name>3',5'-cyclic AMP</name>
        <dbReference type="ChEBI" id="CHEBI:58165"/>
        <label>2</label>
    </ligand>
</feature>
<feature type="binding site" evidence="1">
    <location>
        <position position="326"/>
    </location>
    <ligand>
        <name>3',5'-cyclic AMP</name>
        <dbReference type="ChEBI" id="CHEBI:58165"/>
        <label>2</label>
    </ligand>
</feature>
<feature type="binding site" evidence="1">
    <location>
        <position position="335"/>
    </location>
    <ligand>
        <name>3',5'-cyclic AMP</name>
        <dbReference type="ChEBI" id="CHEBI:58165"/>
        <label>2</label>
    </ligand>
</feature>
<feature type="modified residue" description="N-acetylmethionine" evidence="3">
    <location>
        <position position="1"/>
    </location>
</feature>
<feature type="modified residue" description="Phosphoserine" evidence="2">
    <location>
        <position position="3"/>
    </location>
</feature>
<feature type="modified residue" description="Phosphothreonine" evidence="3">
    <location>
        <position position="75"/>
    </location>
</feature>
<feature type="modified residue" description="Phosphoserine" evidence="3">
    <location>
        <position position="77"/>
    </location>
</feature>
<feature type="modified residue" description="Phosphoserine" evidence="3">
    <location>
        <position position="83"/>
    </location>
</feature>
<feature type="modified residue" description="Phosphoserine" evidence="4">
    <location>
        <position position="101"/>
    </location>
</feature>
<feature type="modified residue" description="Phosphoserine" evidence="2">
    <location>
        <position position="258"/>
    </location>
</feature>
<feature type="disulfide bond" description="Interchain (with C-39)" evidence="1">
    <location>
        <position position="18"/>
    </location>
</feature>
<feature type="disulfide bond" description="Interchain (with C-18)" evidence="1">
    <location>
        <position position="39"/>
    </location>
</feature>
<feature type="sequence conflict" description="In Ref. 1; CAH93424." evidence="6" ref="1">
    <original>A</original>
    <variation>V</variation>
    <location>
        <position position="12"/>
    </location>
</feature>
<feature type="sequence conflict" description="In Ref. 1; CAH89796." evidence="6" ref="1">
    <original>S</original>
    <variation>P</variation>
    <location>
        <position position="77"/>
    </location>
</feature>
<feature type="sequence conflict" description="In Ref. 1; CAH93424." evidence="6" ref="1">
    <original>P</original>
    <variation>S</variation>
    <location>
        <position position="89"/>
    </location>
</feature>
<reference key="1">
    <citation type="submission" date="2004-11" db="EMBL/GenBank/DDBJ databases">
        <authorList>
            <consortium name="The German cDNA consortium"/>
        </authorList>
    </citation>
    <scope>NUCLEOTIDE SEQUENCE [LARGE SCALE MRNA]</scope>
    <source>
        <tissue>Brain cortex</tissue>
    </source>
</reference>
<comment type="function">
    <text evidence="1">Regulatory subunit of the cAMP-dependent protein kinases involved in cAMP signaling in cells.</text>
</comment>
<comment type="subunit">
    <text evidence="1 3">The inactive holoenzyme is composed of two regulatory chains and two catalytic chains. Activation by cAMP releases the two active catalytic monomers and the regulatory dimer. Interacts with PRKACA and PRKACB (By similarity). PRKAR1A also interacts with RFC2; the complex may be involved in cell survival. Interacts with AKAP4. Interacts with RARA; the interaction occurs in the presence of cAMP or FSH and regulates RARA transcriptional activity. Interacts with the phosphorylated form of PJA2. Interacts with CBFA2T3. Interacts with PRKX; regulates this cAMP-dependent protein kinase (By similarity). Interacts with smAKAP; this interaction may target PRKAR1A to the plasma membrane. Interacts with AICDA (By similarity).</text>
</comment>
<comment type="subcellular location">
    <subcellularLocation>
        <location evidence="1">Cell membrane</location>
    </subcellularLocation>
</comment>
<comment type="PTM">
    <text evidence="1">The pseudophosphorylation site binds to the substrate-binding region of the catalytic chain, resulting in the inhibition of its activity.</text>
</comment>
<comment type="similarity">
    <text evidence="6">Belongs to the cAMP-dependent kinase regulatory chain family.</text>
</comment>
<proteinExistence type="evidence at transcript level"/>
<dbReference type="EMBL" id="CR857513">
    <property type="protein sequence ID" value="CAH89796.1"/>
    <property type="molecule type" value="mRNA"/>
</dbReference>
<dbReference type="EMBL" id="CR860291">
    <property type="protein sequence ID" value="CAH92431.1"/>
    <property type="molecule type" value="mRNA"/>
</dbReference>
<dbReference type="EMBL" id="CR861364">
    <property type="protein sequence ID" value="CAH93424.1"/>
    <property type="molecule type" value="mRNA"/>
</dbReference>
<dbReference type="RefSeq" id="NP_001124827.1">
    <property type="nucleotide sequence ID" value="NM_001131355.1"/>
</dbReference>
<dbReference type="RefSeq" id="XP_009234925.1">
    <property type="nucleotide sequence ID" value="XM_009236650.3"/>
</dbReference>
<dbReference type="RefSeq" id="XP_009234926.1">
    <property type="nucleotide sequence ID" value="XM_009236651.3"/>
</dbReference>
<dbReference type="RefSeq" id="XP_009234927.1">
    <property type="nucleotide sequence ID" value="XM_009236652.4"/>
</dbReference>
<dbReference type="SMR" id="Q5REL1"/>
<dbReference type="FunCoup" id="Q5REL1">
    <property type="interactions" value="1162"/>
</dbReference>
<dbReference type="STRING" id="9601.ENSPPYP00000010056"/>
<dbReference type="Ensembl" id="ENSPPYT00000010457.3">
    <property type="protein sequence ID" value="ENSPPYP00000010056.2"/>
    <property type="gene ID" value="ENSPPYG00000008962.3"/>
</dbReference>
<dbReference type="GeneID" id="100171685"/>
<dbReference type="KEGG" id="pon:100171685"/>
<dbReference type="CTD" id="5573"/>
<dbReference type="eggNOG" id="KOG1113">
    <property type="taxonomic scope" value="Eukaryota"/>
</dbReference>
<dbReference type="GeneTree" id="ENSGT00940000155148"/>
<dbReference type="HOGENOM" id="CLU_018310_1_0_1"/>
<dbReference type="InParanoid" id="Q5REL1"/>
<dbReference type="OMA" id="YELYMNA"/>
<dbReference type="OrthoDB" id="417078at2759"/>
<dbReference type="TreeFam" id="TF314920"/>
<dbReference type="Proteomes" id="UP000001595">
    <property type="component" value="Chromosome 17"/>
</dbReference>
<dbReference type="GO" id="GO:0005952">
    <property type="term" value="C:cAMP-dependent protein kinase complex"/>
    <property type="evidence" value="ECO:0007669"/>
    <property type="project" value="InterPro"/>
</dbReference>
<dbReference type="GO" id="GO:0005829">
    <property type="term" value="C:cytosol"/>
    <property type="evidence" value="ECO:0007669"/>
    <property type="project" value="TreeGrafter"/>
</dbReference>
<dbReference type="GO" id="GO:0005886">
    <property type="term" value="C:plasma membrane"/>
    <property type="evidence" value="ECO:0007669"/>
    <property type="project" value="UniProtKB-SubCell"/>
</dbReference>
<dbReference type="GO" id="GO:0030552">
    <property type="term" value="F:cAMP binding"/>
    <property type="evidence" value="ECO:0007669"/>
    <property type="project" value="UniProtKB-KW"/>
</dbReference>
<dbReference type="GO" id="GO:0004862">
    <property type="term" value="F:cAMP-dependent protein kinase inhibitor activity"/>
    <property type="evidence" value="ECO:0007669"/>
    <property type="project" value="TreeGrafter"/>
</dbReference>
<dbReference type="GO" id="GO:0034236">
    <property type="term" value="F:protein kinase A catalytic subunit binding"/>
    <property type="evidence" value="ECO:0007669"/>
    <property type="project" value="TreeGrafter"/>
</dbReference>
<dbReference type="CDD" id="cd00038">
    <property type="entry name" value="CAP_ED"/>
    <property type="match status" value="2"/>
</dbReference>
<dbReference type="CDD" id="cd12101">
    <property type="entry name" value="DD_RIalpha_PKA"/>
    <property type="match status" value="1"/>
</dbReference>
<dbReference type="FunFam" id="2.60.120.10:FF:000013">
    <property type="entry name" value="cAMP-dependent protein kinase type I regulatory subunit"/>
    <property type="match status" value="1"/>
</dbReference>
<dbReference type="FunFam" id="1.20.890.10:FF:000001">
    <property type="entry name" value="cAMP-dependent protein kinase type I-alpha regulatory subunit"/>
    <property type="match status" value="1"/>
</dbReference>
<dbReference type="FunFam" id="2.60.120.10:FF:000006">
    <property type="entry name" value="cAMP-dependent protein kinase type I-alpha regulatory subunit"/>
    <property type="match status" value="1"/>
</dbReference>
<dbReference type="Gene3D" id="1.20.890.10">
    <property type="entry name" value="cAMP-dependent protein kinase regulatory subunit, dimerization-anchoring domain"/>
    <property type="match status" value="1"/>
</dbReference>
<dbReference type="Gene3D" id="2.60.120.10">
    <property type="entry name" value="Jelly Rolls"/>
    <property type="match status" value="2"/>
</dbReference>
<dbReference type="InterPro" id="IPR050503">
    <property type="entry name" value="cAMP-dep_PK_reg_su-like"/>
</dbReference>
<dbReference type="InterPro" id="IPR012198">
    <property type="entry name" value="cAMP_dep_PK_reg_su"/>
</dbReference>
<dbReference type="InterPro" id="IPR003117">
    <property type="entry name" value="cAMP_dep_PK_reg_su_I/II_a/b"/>
</dbReference>
<dbReference type="InterPro" id="IPR018488">
    <property type="entry name" value="cNMP-bd_CS"/>
</dbReference>
<dbReference type="InterPro" id="IPR000595">
    <property type="entry name" value="cNMP-bd_dom"/>
</dbReference>
<dbReference type="InterPro" id="IPR018490">
    <property type="entry name" value="cNMP-bd_dom_sf"/>
</dbReference>
<dbReference type="InterPro" id="IPR014710">
    <property type="entry name" value="RmlC-like_jellyroll"/>
</dbReference>
<dbReference type="PANTHER" id="PTHR11635">
    <property type="entry name" value="CAMP-DEPENDENT PROTEIN KINASE REGULATORY CHAIN"/>
    <property type="match status" value="1"/>
</dbReference>
<dbReference type="PANTHER" id="PTHR11635:SF129">
    <property type="entry name" value="CAMP-DEPENDENT PROTEIN KINASE TYPE I-ALPHA REGULATORY SUBUNIT"/>
    <property type="match status" value="1"/>
</dbReference>
<dbReference type="Pfam" id="PF00027">
    <property type="entry name" value="cNMP_binding"/>
    <property type="match status" value="2"/>
</dbReference>
<dbReference type="Pfam" id="PF02197">
    <property type="entry name" value="RIIa"/>
    <property type="match status" value="1"/>
</dbReference>
<dbReference type="PIRSF" id="PIRSF000548">
    <property type="entry name" value="PK_regulatory"/>
    <property type="match status" value="1"/>
</dbReference>
<dbReference type="PRINTS" id="PR00103">
    <property type="entry name" value="CAMPKINASE"/>
</dbReference>
<dbReference type="SMART" id="SM00100">
    <property type="entry name" value="cNMP"/>
    <property type="match status" value="2"/>
</dbReference>
<dbReference type="SMART" id="SM00394">
    <property type="entry name" value="RIIa"/>
    <property type="match status" value="1"/>
</dbReference>
<dbReference type="SUPFAM" id="SSF51206">
    <property type="entry name" value="cAMP-binding domain-like"/>
    <property type="match status" value="2"/>
</dbReference>
<dbReference type="SUPFAM" id="SSF47391">
    <property type="entry name" value="Dimerization-anchoring domain of cAMP-dependent PK regulatory subunit"/>
    <property type="match status" value="1"/>
</dbReference>
<dbReference type="PROSITE" id="PS00888">
    <property type="entry name" value="CNMP_BINDING_1"/>
    <property type="match status" value="2"/>
</dbReference>
<dbReference type="PROSITE" id="PS00889">
    <property type="entry name" value="CNMP_BINDING_2"/>
    <property type="match status" value="2"/>
</dbReference>
<dbReference type="PROSITE" id="PS50042">
    <property type="entry name" value="CNMP_BINDING_3"/>
    <property type="match status" value="2"/>
</dbReference>
<gene>
    <name type="primary">PRKAR1A</name>
</gene>
<organism>
    <name type="scientific">Pongo abelii</name>
    <name type="common">Sumatran orangutan</name>
    <name type="synonym">Pongo pygmaeus abelii</name>
    <dbReference type="NCBI Taxonomy" id="9601"/>
    <lineage>
        <taxon>Eukaryota</taxon>
        <taxon>Metazoa</taxon>
        <taxon>Chordata</taxon>
        <taxon>Craniata</taxon>
        <taxon>Vertebrata</taxon>
        <taxon>Euteleostomi</taxon>
        <taxon>Mammalia</taxon>
        <taxon>Eutheria</taxon>
        <taxon>Euarchontoglires</taxon>
        <taxon>Primates</taxon>
        <taxon>Haplorrhini</taxon>
        <taxon>Catarrhini</taxon>
        <taxon>Hominidae</taxon>
        <taxon>Pongo</taxon>
    </lineage>
</organism>
<protein>
    <recommendedName>
        <fullName>cAMP-dependent protein kinase type I-alpha regulatory subunit</fullName>
    </recommendedName>
</protein>
<accession>Q5REL1</accession>
<accession>Q5R492</accession>
<accession>Q5R729</accession>
<name>KAP0_PONAB</name>
<evidence type="ECO:0000250" key="1"/>
<evidence type="ECO:0000250" key="2">
    <source>
        <dbReference type="UniProtKB" id="P09456"/>
    </source>
</evidence>
<evidence type="ECO:0000250" key="3">
    <source>
        <dbReference type="UniProtKB" id="P10644"/>
    </source>
</evidence>
<evidence type="ECO:0000250" key="4">
    <source>
        <dbReference type="UniProtKB" id="Q9DBC7"/>
    </source>
</evidence>
<evidence type="ECO:0000256" key="5">
    <source>
        <dbReference type="SAM" id="MobiDB-lite"/>
    </source>
</evidence>
<evidence type="ECO:0000305" key="6"/>
<sequence length="381" mass="42982">MESGSTAASEEARSLRECELYVQKHNIQALLKDSIVQLCTARPERPMAFLREYFERLEKEEAKQIQNLQKAGTRTDSREDEISPPPPNPVVKGRRRRGAISAEVYTEEDAASYVRKVIPKDYKTMAALAKAIEKNVLFSHLDDNERSDIFDAMFSVSFIAGETVIQQGDEGDNFYVIDQGETDVYVNNEWATSVGEGGSFGELALIYGTPRAATVKAKTNVKLWGIDRDSYRRILMGSTLRKRKMYEEFLSKVSILESLDKWERLTVADALEPVQFEDGQKIVVQGEPGDEFFIILEGSAAVLQRRSENEEFVEVGRLGPSDYFGEIALLMNRPRAATVVARGPLKCVKLDRPRFERVLGPCSDILKRNIQQYNSFVSLSV</sequence>